<protein>
    <recommendedName>
        <fullName evidence="1">Bacilliredoxin SACOL1464</fullName>
    </recommendedName>
</protein>
<dbReference type="EMBL" id="CP000046">
    <property type="protein sequence ID" value="AAW36664.1"/>
    <property type="molecule type" value="Genomic_DNA"/>
</dbReference>
<dbReference type="SMR" id="Q5HFZ5"/>
<dbReference type="KEGG" id="sac:SACOL1464"/>
<dbReference type="HOGENOM" id="CLU_132521_0_0_9"/>
<dbReference type="Proteomes" id="UP000000530">
    <property type="component" value="Chromosome"/>
</dbReference>
<dbReference type="GO" id="GO:0045454">
    <property type="term" value="P:cell redox homeostasis"/>
    <property type="evidence" value="ECO:0000250"/>
    <property type="project" value="UniProtKB"/>
</dbReference>
<dbReference type="Gene3D" id="3.40.30.10">
    <property type="entry name" value="Glutaredoxin"/>
    <property type="match status" value="1"/>
</dbReference>
<dbReference type="InterPro" id="IPR009474">
    <property type="entry name" value="BrxB/BrxA"/>
</dbReference>
<dbReference type="NCBIfam" id="TIGR04191">
    <property type="entry name" value="YphP_YqiW"/>
    <property type="match status" value="1"/>
</dbReference>
<dbReference type="PANTHER" id="PTHR40052:SF2">
    <property type="entry name" value="BACILLIREDOXIN BRXA"/>
    <property type="match status" value="1"/>
</dbReference>
<dbReference type="PANTHER" id="PTHR40052">
    <property type="entry name" value="UPF0403 PROTEIN YQIW-RELATED"/>
    <property type="match status" value="1"/>
</dbReference>
<dbReference type="Pfam" id="PF06491">
    <property type="entry name" value="Disulph_isomer"/>
    <property type="match status" value="1"/>
</dbReference>
<organism>
    <name type="scientific">Staphylococcus aureus (strain COL)</name>
    <dbReference type="NCBI Taxonomy" id="93062"/>
    <lineage>
        <taxon>Bacteria</taxon>
        <taxon>Bacillati</taxon>
        <taxon>Bacillota</taxon>
        <taxon>Bacilli</taxon>
        <taxon>Bacillales</taxon>
        <taxon>Staphylococcaceae</taxon>
        <taxon>Staphylococcus</taxon>
    </lineage>
</organism>
<gene>
    <name type="ordered locus">SACOL1464</name>
</gene>
<feature type="chain" id="PRO_0000271997" description="Bacilliredoxin SACOL1464">
    <location>
        <begin position="1"/>
        <end position="145"/>
    </location>
</feature>
<comment type="similarity">
    <text evidence="1">Belongs to the bacilliredoxin family.</text>
</comment>
<accession>Q5HFZ5</accession>
<reference key="1">
    <citation type="journal article" date="2005" name="J. Bacteriol.">
        <title>Insights on evolution of virulence and resistance from the complete genome analysis of an early methicillin-resistant Staphylococcus aureus strain and a biofilm-producing methicillin-resistant Staphylococcus epidermidis strain.</title>
        <authorList>
            <person name="Gill S.R."/>
            <person name="Fouts D.E."/>
            <person name="Archer G.L."/>
            <person name="Mongodin E.F."/>
            <person name="DeBoy R.T."/>
            <person name="Ravel J."/>
            <person name="Paulsen I.T."/>
            <person name="Kolonay J.F."/>
            <person name="Brinkac L.M."/>
            <person name="Beanan M.J."/>
            <person name="Dodson R.J."/>
            <person name="Daugherty S.C."/>
            <person name="Madupu R."/>
            <person name="Angiuoli S.V."/>
            <person name="Durkin A.S."/>
            <person name="Haft D.H."/>
            <person name="Vamathevan J.J."/>
            <person name="Khouri H."/>
            <person name="Utterback T.R."/>
            <person name="Lee C."/>
            <person name="Dimitrov G."/>
            <person name="Jiang L."/>
            <person name="Qin H."/>
            <person name="Weidman J."/>
            <person name="Tran K."/>
            <person name="Kang K.H."/>
            <person name="Hance I.R."/>
            <person name="Nelson K.E."/>
            <person name="Fraser C.M."/>
        </authorList>
    </citation>
    <scope>NUCLEOTIDE SEQUENCE [LARGE SCALE GENOMIC DNA]</scope>
    <source>
        <strain>COL</strain>
    </source>
</reference>
<proteinExistence type="inferred from homology"/>
<evidence type="ECO:0000305" key="1"/>
<sequence length="145" mass="16014">MNAYDAYMKEIAQQMRGELTQNGFTSLETSEAVSEYMNQVNADDTTFVVINSTCGCAAGLARPAAVAVATQNEHRPTNTVTVFAGQDKEATATMREFIQQAPSSPSYALFKGQDLVYFMPREFIEGRDINDIAMDLKDAFDENCK</sequence>
<name>Y1464_STAAC</name>